<name>3602L_ASFWA</name>
<feature type="chain" id="PRO_0000373249" description="Protein MGF 360-2L">
    <location>
        <begin position="1"/>
        <end position="360"/>
    </location>
</feature>
<dbReference type="EMBL" id="AY261366">
    <property type="status" value="NOT_ANNOTATED_CDS"/>
    <property type="molecule type" value="Genomic_DNA"/>
</dbReference>
<dbReference type="SMR" id="P0C9M3"/>
<dbReference type="Proteomes" id="UP000000858">
    <property type="component" value="Segment"/>
</dbReference>
<dbReference type="GO" id="GO:0042330">
    <property type="term" value="P:taxis"/>
    <property type="evidence" value="ECO:0007669"/>
    <property type="project" value="InterPro"/>
</dbReference>
<dbReference type="InterPro" id="IPR036770">
    <property type="entry name" value="Ankyrin_rpt-contain_sf"/>
</dbReference>
<dbReference type="InterPro" id="IPR002595">
    <property type="entry name" value="ASFV_MGF360"/>
</dbReference>
<dbReference type="Pfam" id="PF01671">
    <property type="entry name" value="ASFV_360"/>
    <property type="match status" value="1"/>
</dbReference>
<dbReference type="SUPFAM" id="SSF48403">
    <property type="entry name" value="Ankyrin repeat"/>
    <property type="match status" value="1"/>
</dbReference>
<organismHost>
    <name type="scientific">Ornithodoros</name>
    <name type="common">relapsing fever ticks</name>
    <dbReference type="NCBI Taxonomy" id="6937"/>
</organismHost>
<organismHost>
    <name type="scientific">Phacochoerus aethiopicus</name>
    <name type="common">Warthog</name>
    <dbReference type="NCBI Taxonomy" id="85517"/>
</organismHost>
<organismHost>
    <name type="scientific">Phacochoerus africanus</name>
    <name type="common">Warthog</name>
    <dbReference type="NCBI Taxonomy" id="41426"/>
</organismHost>
<organismHost>
    <name type="scientific">Potamochoerus larvatus</name>
    <name type="common">Bushpig</name>
    <dbReference type="NCBI Taxonomy" id="273792"/>
</organismHost>
<organismHost>
    <name type="scientific">Sus scrofa</name>
    <name type="common">Pig</name>
    <dbReference type="NCBI Taxonomy" id="9823"/>
</organismHost>
<reference key="1">
    <citation type="submission" date="2003-03" db="EMBL/GenBank/DDBJ databases">
        <title>African swine fever virus genomes.</title>
        <authorList>
            <person name="Kutish G.F."/>
            <person name="Rock D.L."/>
        </authorList>
    </citation>
    <scope>NUCLEOTIDE SEQUENCE [LARGE SCALE GENOMIC DNA]</scope>
</reference>
<organism>
    <name type="scientific">African swine fever virus (isolate Warthog/Namibia/Wart80/1980)</name>
    <name type="common">ASFV</name>
    <dbReference type="NCBI Taxonomy" id="561444"/>
    <lineage>
        <taxon>Viruses</taxon>
        <taxon>Varidnaviria</taxon>
        <taxon>Bamfordvirae</taxon>
        <taxon>Nucleocytoviricota</taxon>
        <taxon>Pokkesviricetes</taxon>
        <taxon>Asfuvirales</taxon>
        <taxon>Asfarviridae</taxon>
        <taxon>Asfivirus</taxon>
        <taxon>African swine fever virus</taxon>
    </lineage>
</organism>
<protein>
    <recommendedName>
        <fullName>Protein MGF 360-2L</fullName>
    </recommendedName>
</protein>
<gene>
    <name type="ordered locus">War-173</name>
</gene>
<proteinExistence type="inferred from homology"/>
<sequence>MPTPLSLQTLAKKLLATQYISKDYYFILKYCGLWWHGAPIMLSTNEDNQLMIKSASFKEGLSLDLALMKVVQENNHDLIKLFTEWGADINSSLVTVNMECTRNLCRELGAKEALNERDILQIFYKTRDIKTSSHVILCHELLSNNPLFQNIERMRSIIYRSLEKLSINFILDDISFSEMLTRHWYGLAILYNLTEAIQYFYEKYKHFKNWRLICGLSFNNLSDLYEIYNLEKVDMDIDEMMYLACSMYGGNYSTIYYCFVLGADINQAMLTSVINHHIDNLFFCIDLGADAFEESMELAKQKNHNILVHILSFKNYSPDFSLLSLKMTDPEKINALLDEEKYESKNMLMYDEFDACTNNL</sequence>
<comment type="function">
    <text evidence="1">Plays a role in virus cell tropism, and may be required for efficient virus replication in macrophages.</text>
</comment>
<comment type="similarity">
    <text evidence="2">Belongs to the asfivirus MGF 360 family.</text>
</comment>
<evidence type="ECO:0000250" key="1"/>
<evidence type="ECO:0000305" key="2"/>
<accession>P0C9M3</accession>